<reference key="1">
    <citation type="journal article" date="2004" name="J. Biol. Chem.">
        <title>Type II metacaspases Atmc4 and Atmc9 of Arabidopsis thaliana cleave substrates after arginine and lysine.</title>
        <authorList>
            <person name="Vercammen D."/>
            <person name="van de Cotte B."/>
            <person name="De Jaeger G."/>
            <person name="Eeckhout D."/>
            <person name="Casteels P."/>
            <person name="Vandepoele K."/>
            <person name="Vandenberghe I."/>
            <person name="van Beeumen J."/>
            <person name="Inze D."/>
            <person name="van Breusegem F."/>
        </authorList>
    </citation>
    <scope>NUCLEOTIDE SEQUENCE [MRNA]</scope>
    <scope>FUNCTION</scope>
    <scope>AUTOCATALYTIC CLEAVAGE</scope>
    <scope>GENE FAMILY</scope>
    <scope>NOMENCLATURE</scope>
    <scope>MUTAGENESIS OF CYS-139</scope>
</reference>
<reference key="2">
    <citation type="submission" date="2003-07" db="EMBL/GenBank/DDBJ databases">
        <title>Characterization of metacaspases.</title>
        <authorList>
            <person name="Ikeda Y."/>
            <person name="Krishnamurthy N."/>
            <person name="Chua N.-H."/>
        </authorList>
    </citation>
    <scope>NUCLEOTIDE SEQUENCE [MRNA]</scope>
</reference>
<reference key="3">
    <citation type="journal article" date="2000" name="Nature">
        <title>Sequence and analysis of chromosome 1 of the plant Arabidopsis thaliana.</title>
        <authorList>
            <person name="Theologis A."/>
            <person name="Ecker J.R."/>
            <person name="Palm C.J."/>
            <person name="Federspiel N.A."/>
            <person name="Kaul S."/>
            <person name="White O."/>
            <person name="Alonso J."/>
            <person name="Altafi H."/>
            <person name="Araujo R."/>
            <person name="Bowman C.L."/>
            <person name="Brooks S.Y."/>
            <person name="Buehler E."/>
            <person name="Chan A."/>
            <person name="Chao Q."/>
            <person name="Chen H."/>
            <person name="Cheuk R.F."/>
            <person name="Chin C.W."/>
            <person name="Chung M.K."/>
            <person name="Conn L."/>
            <person name="Conway A.B."/>
            <person name="Conway A.R."/>
            <person name="Creasy T.H."/>
            <person name="Dewar K."/>
            <person name="Dunn P."/>
            <person name="Etgu P."/>
            <person name="Feldblyum T.V."/>
            <person name="Feng J.-D."/>
            <person name="Fong B."/>
            <person name="Fujii C.Y."/>
            <person name="Gill J.E."/>
            <person name="Goldsmith A.D."/>
            <person name="Haas B."/>
            <person name="Hansen N.F."/>
            <person name="Hughes B."/>
            <person name="Huizar L."/>
            <person name="Hunter J.L."/>
            <person name="Jenkins J."/>
            <person name="Johnson-Hopson C."/>
            <person name="Khan S."/>
            <person name="Khaykin E."/>
            <person name="Kim C.J."/>
            <person name="Koo H.L."/>
            <person name="Kremenetskaia I."/>
            <person name="Kurtz D.B."/>
            <person name="Kwan A."/>
            <person name="Lam B."/>
            <person name="Langin-Hooper S."/>
            <person name="Lee A."/>
            <person name="Lee J.M."/>
            <person name="Lenz C.A."/>
            <person name="Li J.H."/>
            <person name="Li Y.-P."/>
            <person name="Lin X."/>
            <person name="Liu S.X."/>
            <person name="Liu Z.A."/>
            <person name="Luros J.S."/>
            <person name="Maiti R."/>
            <person name="Marziali A."/>
            <person name="Militscher J."/>
            <person name="Miranda M."/>
            <person name="Nguyen M."/>
            <person name="Nierman W.C."/>
            <person name="Osborne B.I."/>
            <person name="Pai G."/>
            <person name="Peterson J."/>
            <person name="Pham P.K."/>
            <person name="Rizzo M."/>
            <person name="Rooney T."/>
            <person name="Rowley D."/>
            <person name="Sakano H."/>
            <person name="Salzberg S.L."/>
            <person name="Schwartz J.R."/>
            <person name="Shinn P."/>
            <person name="Southwick A.M."/>
            <person name="Sun H."/>
            <person name="Tallon L.J."/>
            <person name="Tambunga G."/>
            <person name="Toriumi M.J."/>
            <person name="Town C.D."/>
            <person name="Utterback T."/>
            <person name="Van Aken S."/>
            <person name="Vaysberg M."/>
            <person name="Vysotskaia V.S."/>
            <person name="Walker M."/>
            <person name="Wu D."/>
            <person name="Yu G."/>
            <person name="Fraser C.M."/>
            <person name="Venter J.C."/>
            <person name="Davis R.W."/>
        </authorList>
    </citation>
    <scope>NUCLEOTIDE SEQUENCE [LARGE SCALE GENOMIC DNA]</scope>
    <source>
        <strain>cv. Columbia</strain>
    </source>
</reference>
<reference key="4">
    <citation type="journal article" date="2017" name="Plant J.">
        <title>Araport11: a complete reannotation of the Arabidopsis thaliana reference genome.</title>
        <authorList>
            <person name="Cheng C.Y."/>
            <person name="Krishnakumar V."/>
            <person name="Chan A.P."/>
            <person name="Thibaud-Nissen F."/>
            <person name="Schobel S."/>
            <person name="Town C.D."/>
        </authorList>
    </citation>
    <scope>GENOME REANNOTATION</scope>
    <source>
        <strain>cv. Columbia</strain>
    </source>
</reference>
<reference key="5">
    <citation type="journal article" date="2003" name="Science">
        <title>Empirical analysis of transcriptional activity in the Arabidopsis genome.</title>
        <authorList>
            <person name="Yamada K."/>
            <person name="Lim J."/>
            <person name="Dale J.M."/>
            <person name="Chen H."/>
            <person name="Shinn P."/>
            <person name="Palm C.J."/>
            <person name="Southwick A.M."/>
            <person name="Wu H.C."/>
            <person name="Kim C.J."/>
            <person name="Nguyen M."/>
            <person name="Pham P.K."/>
            <person name="Cheuk R.F."/>
            <person name="Karlin-Newmann G."/>
            <person name="Liu S.X."/>
            <person name="Lam B."/>
            <person name="Sakano H."/>
            <person name="Wu T."/>
            <person name="Yu G."/>
            <person name="Miranda M."/>
            <person name="Quach H.L."/>
            <person name="Tripp M."/>
            <person name="Chang C.H."/>
            <person name="Lee J.M."/>
            <person name="Toriumi M.J."/>
            <person name="Chan M.M."/>
            <person name="Tang C.C."/>
            <person name="Onodera C.S."/>
            <person name="Deng J.M."/>
            <person name="Akiyama K."/>
            <person name="Ansari Y."/>
            <person name="Arakawa T."/>
            <person name="Banh J."/>
            <person name="Banno F."/>
            <person name="Bowser L."/>
            <person name="Brooks S.Y."/>
            <person name="Carninci P."/>
            <person name="Chao Q."/>
            <person name="Choy N."/>
            <person name="Enju A."/>
            <person name="Goldsmith A.D."/>
            <person name="Gurjal M."/>
            <person name="Hansen N.F."/>
            <person name="Hayashizaki Y."/>
            <person name="Johnson-Hopson C."/>
            <person name="Hsuan V.W."/>
            <person name="Iida K."/>
            <person name="Karnes M."/>
            <person name="Khan S."/>
            <person name="Koesema E."/>
            <person name="Ishida J."/>
            <person name="Jiang P.X."/>
            <person name="Jones T."/>
            <person name="Kawai J."/>
            <person name="Kamiya A."/>
            <person name="Meyers C."/>
            <person name="Nakajima M."/>
            <person name="Narusaka M."/>
            <person name="Seki M."/>
            <person name="Sakurai T."/>
            <person name="Satou M."/>
            <person name="Tamse R."/>
            <person name="Vaysberg M."/>
            <person name="Wallender E.K."/>
            <person name="Wong C."/>
            <person name="Yamamura Y."/>
            <person name="Yuan S."/>
            <person name="Shinozaki K."/>
            <person name="Davis R.W."/>
            <person name="Theologis A."/>
            <person name="Ecker J.R."/>
        </authorList>
    </citation>
    <scope>NUCLEOTIDE SEQUENCE [LARGE SCALE MRNA]</scope>
    <source>
        <strain>cv. Columbia</strain>
    </source>
</reference>
<reference key="6">
    <citation type="journal article" date="2004" name="Mol. Plant Pathol.">
        <title>Recent advance in the study of caspase-like proteases and Bax inhibitor-1 in plants: their possible roles as regulator of programmed cell death.</title>
        <authorList>
            <person name="Watanabe N."/>
            <person name="Lam E."/>
        </authorList>
    </citation>
    <scope>GENE FAMILY</scope>
</reference>
<reference key="7">
    <citation type="journal article" date="2011" name="J. Biol. Chem.">
        <title>Calcium-dependent activation and autolysis of Arabidopsis metacaspase 2d.</title>
        <authorList>
            <person name="Watanabe N."/>
            <person name="Lam E."/>
        </authorList>
    </citation>
    <scope>FUNCTION</scope>
    <scope>ACTIVITY REGULATION</scope>
    <scope>BIOPHYSICOCHEMICAL PROPERTIES</scope>
    <scope>AUTOCATALYTIC CLEAVAGE</scope>
    <scope>MUTAGENESIS OF CYS-139; ARG-190; LYS-225 AND LYS-271</scope>
</reference>
<reference key="8">
    <citation type="journal article" date="2011" name="Plant J.">
        <title>Arabidopsis metacaspase 2d is a positive mediator of cell death induced during biotic and abiotic stresses.</title>
        <authorList>
            <person name="Watanabe N."/>
            <person name="Lam E."/>
        </authorList>
    </citation>
    <scope>FUNCTION</scope>
    <scope>SUBCELLULAR LOCATION</scope>
    <scope>TISSUE SPECIFICITY</scope>
    <scope>DISRUPTION PHENOTYPE</scope>
</reference>
<keyword id="KW-0002">3D-structure</keyword>
<keyword id="KW-0068">Autocatalytic cleavage</keyword>
<keyword id="KW-0963">Cytoplasm</keyword>
<keyword id="KW-0378">Hydrolase</keyword>
<keyword id="KW-0611">Plant defense</keyword>
<keyword id="KW-0645">Protease</keyword>
<keyword id="KW-1185">Reference proteome</keyword>
<keyword id="KW-0702">S-nitrosylation</keyword>
<keyword id="KW-0788">Thiol protease</keyword>
<accession>O64517</accession>
<accession>Q7XBI1</accession>
<comment type="function">
    <text evidence="4 5 6">Cysteine protease that cleaves specifically after arginine or lysine residues. Does not cleave caspase-specific substrates. Plays a positive regulatory role in biotic and abiotic stress-induced programmed cell death.</text>
</comment>
<comment type="activity regulation">
    <text evidence="5">Activated by Ca(2+) which induces self-processing and accelerates the rate of the enzyme activity, but has no effect on Km.</text>
</comment>
<comment type="biophysicochemical properties">
    <kinetics>
        <KM evidence="5">312 uM for t-butoxycarbonyl-GRR-aminomethylcoumarin (in the presence of 2 mM Ca(2+))</KM>
        <KM evidence="5">292 uM for t-butoxycarbonyl-GRR-aminomethylcoumarin (in the presence of 10 mM Ca(2+))</KM>
        <KM evidence="5">283 uM for t-butoxycarbonyl-GRR-aminomethylcoumarin (in the presence of 50 mM Ca(2+))</KM>
        <Vmax evidence="5">0.53 nmol/min/mg enzyme toward t-butoxycarbonyl-GRR-aminomethylcoumarin (in the presence of 2 mM Ca(2+))</Vmax>
        <Vmax evidence="5">2.28 nmol/min/mg enzyme toward t-butoxycarbonyl-GRR-aminomethylcoumarin (in the presence of 10 mM Ca(2+))</Vmax>
        <Vmax evidence="5">4.37 nmol/min/mg enzyme toward t-butoxycarbonyl-GRR-aminomethylcoumarin (in the presence of 50 mM Ca(2+))</Vmax>
    </kinetics>
</comment>
<comment type="interaction">
    <interactant intactId="EBI-5889420">
        <id>O64517</id>
    </interactant>
    <interactant intactId="EBI-5889420">
        <id>O64517</id>
        <label>AMC4</label>
    </interactant>
    <organismsDiffer>false</organismsDiffer>
    <experiments>4</experiments>
</comment>
<comment type="subcellular location">
    <subcellularLocation>
        <location evidence="6">Cytoplasm</location>
        <location evidence="6">Cytosol</location>
    </subcellularLocation>
</comment>
<comment type="tissue specificity">
    <text evidence="6">Expressed in roots, cotyledons, leaves, cauline leaves, pollen and embryos.</text>
</comment>
<comment type="PTM">
    <text>The two subunits are derived from the precursor sequence by an autocatalytic mechanism.</text>
</comment>
<comment type="disruption phenotype">
    <text evidence="6">No visible phenotype when grown under normal conditions, but reduced sensitivity to cell death induced by the mycotoxin fumonisin B1, methyl viologen (oxidative stress) and infection with an avirulent strain of P.syringae DC3000.</text>
</comment>
<comment type="miscellaneous">
    <text>Plants overexpressing MCA4 are more sensitive to the mycotoxin fumonisin B1 and methyl viologen (oxidative stress) and exhibited accelerated cell-death progression.</text>
</comment>
<comment type="similarity">
    <text evidence="7">Belongs to the peptidase C14B family.</text>
</comment>
<organism>
    <name type="scientific">Arabidopsis thaliana</name>
    <name type="common">Mouse-ear cress</name>
    <dbReference type="NCBI Taxonomy" id="3702"/>
    <lineage>
        <taxon>Eukaryota</taxon>
        <taxon>Viridiplantae</taxon>
        <taxon>Streptophyta</taxon>
        <taxon>Embryophyta</taxon>
        <taxon>Tracheophyta</taxon>
        <taxon>Spermatophyta</taxon>
        <taxon>Magnoliopsida</taxon>
        <taxon>eudicotyledons</taxon>
        <taxon>Gunneridae</taxon>
        <taxon>Pentapetalae</taxon>
        <taxon>rosids</taxon>
        <taxon>malvids</taxon>
        <taxon>Brassicales</taxon>
        <taxon>Brassicaceae</taxon>
        <taxon>Camelineae</taxon>
        <taxon>Arabidopsis</taxon>
    </lineage>
</organism>
<evidence type="ECO:0000250" key="1"/>
<evidence type="ECO:0000250" key="2">
    <source>
        <dbReference type="UniProtKB" id="Q9FYE1"/>
    </source>
</evidence>
<evidence type="ECO:0000256" key="3">
    <source>
        <dbReference type="SAM" id="MobiDB-lite"/>
    </source>
</evidence>
<evidence type="ECO:0000269" key="4">
    <source>
    </source>
</evidence>
<evidence type="ECO:0000269" key="5">
    <source>
    </source>
</evidence>
<evidence type="ECO:0000269" key="6">
    <source>
    </source>
</evidence>
<evidence type="ECO:0000305" key="7"/>
<evidence type="ECO:0007829" key="8">
    <source>
        <dbReference type="PDB" id="6W8R"/>
    </source>
</evidence>
<evidence type="ECO:0007829" key="9">
    <source>
        <dbReference type="PDB" id="6W8S"/>
    </source>
</evidence>
<evidence type="ECO:0007829" key="10">
    <source>
        <dbReference type="PDB" id="6W8T"/>
    </source>
</evidence>
<dbReference type="EC" id="3.4.22.-"/>
<dbReference type="EMBL" id="AY219829">
    <property type="protein sequence ID" value="AAP44517.1"/>
    <property type="molecule type" value="mRNA"/>
</dbReference>
<dbReference type="EMBL" id="AY322529">
    <property type="protein sequence ID" value="AAP84710.2"/>
    <property type="molecule type" value="mRNA"/>
</dbReference>
<dbReference type="EMBL" id="AC002986">
    <property type="protein sequence ID" value="AAC17081.1"/>
    <property type="molecule type" value="Genomic_DNA"/>
</dbReference>
<dbReference type="EMBL" id="CP002684">
    <property type="protein sequence ID" value="AEE36232.1"/>
    <property type="molecule type" value="Genomic_DNA"/>
</dbReference>
<dbReference type="EMBL" id="AY080746">
    <property type="protein sequence ID" value="AAL85992.1"/>
    <property type="molecule type" value="mRNA"/>
</dbReference>
<dbReference type="EMBL" id="AY133847">
    <property type="protein sequence ID" value="AAM91781.1"/>
    <property type="molecule type" value="mRNA"/>
</dbReference>
<dbReference type="PIR" id="T01021">
    <property type="entry name" value="T01021"/>
</dbReference>
<dbReference type="RefSeq" id="NP_178052.1">
    <property type="nucleotide sequence ID" value="NM_106582.4"/>
</dbReference>
<dbReference type="PDB" id="6W8R">
    <property type="method" value="X-ray"/>
    <property type="resolution" value="2.80 A"/>
    <property type="chains" value="A/B=1-418"/>
</dbReference>
<dbReference type="PDB" id="6W8S">
    <property type="method" value="X-ray"/>
    <property type="resolution" value="3.48 A"/>
    <property type="chains" value="A/B/C/D=1-418"/>
</dbReference>
<dbReference type="PDB" id="6W8T">
    <property type="method" value="X-ray"/>
    <property type="resolution" value="3.20 A"/>
    <property type="chains" value="A/B=1-418"/>
</dbReference>
<dbReference type="PDBsum" id="6W8R"/>
<dbReference type="PDBsum" id="6W8S"/>
<dbReference type="PDBsum" id="6W8T"/>
<dbReference type="SMR" id="O64517"/>
<dbReference type="FunCoup" id="O64517">
    <property type="interactions" value="754"/>
</dbReference>
<dbReference type="STRING" id="3702.O64517"/>
<dbReference type="MEROPS" id="C14.033"/>
<dbReference type="GlyGen" id="O64517">
    <property type="glycosylation" value="1 site"/>
</dbReference>
<dbReference type="iPTMnet" id="O64517"/>
<dbReference type="PaxDb" id="3702-AT1G79340.1"/>
<dbReference type="ProteomicsDB" id="238817"/>
<dbReference type="EnsemblPlants" id="AT1G79340.1">
    <property type="protein sequence ID" value="AT1G79340.1"/>
    <property type="gene ID" value="AT1G79340"/>
</dbReference>
<dbReference type="GeneID" id="844272"/>
<dbReference type="Gramene" id="AT1G79340.1">
    <property type="protein sequence ID" value="AT1G79340.1"/>
    <property type="gene ID" value="AT1G79340"/>
</dbReference>
<dbReference type="KEGG" id="ath:AT1G79340"/>
<dbReference type="Araport" id="AT1G79340"/>
<dbReference type="TAIR" id="AT1G79340">
    <property type="gene designation" value="MC4"/>
</dbReference>
<dbReference type="eggNOG" id="KOG1546">
    <property type="taxonomic scope" value="Eukaryota"/>
</dbReference>
<dbReference type="HOGENOM" id="CLU_029389_4_1_1"/>
<dbReference type="InParanoid" id="O64517"/>
<dbReference type="OMA" id="IGCNYQG"/>
<dbReference type="OrthoDB" id="3223806at2759"/>
<dbReference type="PhylomeDB" id="O64517"/>
<dbReference type="PRO" id="PR:O64517"/>
<dbReference type="Proteomes" id="UP000006548">
    <property type="component" value="Chromosome 1"/>
</dbReference>
<dbReference type="ExpressionAtlas" id="O64517">
    <property type="expression patterns" value="baseline and differential"/>
</dbReference>
<dbReference type="GO" id="GO:0005737">
    <property type="term" value="C:cytoplasm"/>
    <property type="evidence" value="ECO:0000314"/>
    <property type="project" value="TAIR"/>
</dbReference>
<dbReference type="GO" id="GO:0005829">
    <property type="term" value="C:cytosol"/>
    <property type="evidence" value="ECO:0000314"/>
    <property type="project" value="UniProtKB"/>
</dbReference>
<dbReference type="GO" id="GO:0005739">
    <property type="term" value="C:mitochondrion"/>
    <property type="evidence" value="ECO:0007005"/>
    <property type="project" value="TAIR"/>
</dbReference>
<dbReference type="GO" id="GO:0005886">
    <property type="term" value="C:plasma membrane"/>
    <property type="evidence" value="ECO:0007005"/>
    <property type="project" value="TAIR"/>
</dbReference>
<dbReference type="GO" id="GO:0009506">
    <property type="term" value="C:plasmodesma"/>
    <property type="evidence" value="ECO:0007005"/>
    <property type="project" value="TAIR"/>
</dbReference>
<dbReference type="GO" id="GO:0004197">
    <property type="term" value="F:cysteine-type endopeptidase activity"/>
    <property type="evidence" value="ECO:0000314"/>
    <property type="project" value="UniProtKB"/>
</dbReference>
<dbReference type="GO" id="GO:0008234">
    <property type="term" value="F:cysteine-type peptidase activity"/>
    <property type="evidence" value="ECO:0000314"/>
    <property type="project" value="TAIR"/>
</dbReference>
<dbReference type="GO" id="GO:0042802">
    <property type="term" value="F:identical protein binding"/>
    <property type="evidence" value="ECO:0000353"/>
    <property type="project" value="IntAct"/>
</dbReference>
<dbReference type="GO" id="GO:0006952">
    <property type="term" value="P:defense response"/>
    <property type="evidence" value="ECO:0007669"/>
    <property type="project" value="UniProtKB-KW"/>
</dbReference>
<dbReference type="GO" id="GO:0043068">
    <property type="term" value="P:positive regulation of programmed cell death"/>
    <property type="evidence" value="ECO:0000314"/>
    <property type="project" value="UniProtKB"/>
</dbReference>
<dbReference type="GO" id="GO:0016540">
    <property type="term" value="P:protein autoprocessing"/>
    <property type="evidence" value="ECO:0000314"/>
    <property type="project" value="UniProtKB"/>
</dbReference>
<dbReference type="FunFam" id="3.40.50.12660:FF:000007">
    <property type="entry name" value="Metacaspase-4"/>
    <property type="match status" value="1"/>
</dbReference>
<dbReference type="FunFam" id="3.40.50.12660:FF:000010">
    <property type="entry name" value="Metacaspase-9"/>
    <property type="match status" value="1"/>
</dbReference>
<dbReference type="Gene3D" id="3.40.50.12660">
    <property type="match status" value="2"/>
</dbReference>
<dbReference type="InterPro" id="IPR029030">
    <property type="entry name" value="Caspase-like_dom_sf"/>
</dbReference>
<dbReference type="InterPro" id="IPR050452">
    <property type="entry name" value="Metacaspase"/>
</dbReference>
<dbReference type="InterPro" id="IPR011600">
    <property type="entry name" value="Pept_C14_caspase"/>
</dbReference>
<dbReference type="PANTHER" id="PTHR48104:SF30">
    <property type="entry name" value="METACASPASE-1"/>
    <property type="match status" value="1"/>
</dbReference>
<dbReference type="PANTHER" id="PTHR48104">
    <property type="entry name" value="METACASPASE-4"/>
    <property type="match status" value="1"/>
</dbReference>
<dbReference type="Pfam" id="PF00656">
    <property type="entry name" value="Peptidase_C14"/>
    <property type="match status" value="1"/>
</dbReference>
<dbReference type="SUPFAM" id="SSF52129">
    <property type="entry name" value="Caspase-like"/>
    <property type="match status" value="1"/>
</dbReference>
<sequence>MTKKAVLIGINYPGTKAELRGCVNDVRRMYKCLVERYGFSEENITVLIDTDESSTQPTGKNIRRALADLVESADSGDVLVVHYSGHGTRLPAETGEDDDTGFDECIVPCDMNLITDDDFRDLVDKVPPGCRMTIISDSCHSGGLIDEAKEQIGESTKKEAEDEDESEESSSRFGFRKFLRSKVEGAIESRGFHIGGNKKDEDEAEEIETKEIELEDGETIHAKDKSLPLQTLIDILKQQTGNDNIEVGKIRPSLFDAFGDDSSPKVKKFMKVILGKLQAGNGEEGGLMGMLGKLASGFLEGKLNDEDYVKPAMQTHVGSKEEVYAGGSRGSVPLPDSGILISGCQTDQTSADATPAGKPTEAYGAMSNSIQTILEETDGEISNREMVTRARKALKKQGFTQQPGLYCHDGYANAPFIC</sequence>
<protein>
    <recommendedName>
        <fullName>Metacaspase-4</fullName>
        <shortName>AtMC4</shortName>
        <ecNumber>3.4.22.-</ecNumber>
    </recommendedName>
    <alternativeName>
        <fullName>Metacaspase 2d</fullName>
        <shortName>AtMCP2d</shortName>
    </alternativeName>
    <alternativeName>
        <fullName>Metacaspase-7</fullName>
    </alternativeName>
    <component>
        <recommendedName>
            <fullName>Metacaspase-4 subunit p20</fullName>
        </recommendedName>
    </component>
    <component>
        <recommendedName>
            <fullName>Metacaspase-4 subunit p10</fullName>
        </recommendedName>
    </component>
</protein>
<name>MCA4_ARATH</name>
<gene>
    <name type="primary">AMC4</name>
    <name type="synonym">AMC7</name>
    <name type="synonym">MCP2D</name>
    <name type="ordered locus">At1g79340</name>
    <name type="ORF">YUP8H12R.4</name>
</gene>
<feature type="chain" id="PRO_0000334602" description="Metacaspase-4">
    <location>
        <begin position="1"/>
        <end position="418"/>
    </location>
</feature>
<feature type="chain" id="PRO_0000411017" description="Metacaspase-4 subunit p20">
    <location>
        <begin position="1"/>
        <end position="225"/>
    </location>
</feature>
<feature type="chain" id="PRO_0000411018" description="Metacaspase-4 subunit p10">
    <location>
        <begin position="226"/>
        <end position="418"/>
    </location>
</feature>
<feature type="region of interest" description="Disordered" evidence="3">
    <location>
        <begin position="153"/>
        <end position="172"/>
    </location>
</feature>
<feature type="active site" evidence="1">
    <location>
        <position position="86"/>
    </location>
</feature>
<feature type="active site">
    <location>
        <position position="139"/>
    </location>
</feature>
<feature type="site" description="Cleavage; by autolysis">
    <location>
        <begin position="225"/>
        <end position="226"/>
    </location>
</feature>
<feature type="modified residue" description="S-nitrosocysteine" evidence="2">
    <location>
        <position position="139"/>
    </location>
</feature>
<feature type="mutagenesis site" description="Loss of autoprocessing and protease activity." evidence="4 5">
    <original>C</original>
    <variation>A</variation>
    <location>
        <position position="139"/>
    </location>
</feature>
<feature type="mutagenesis site" description="No effect on protease activity." evidence="5">
    <original>R</original>
    <variation>G</variation>
    <location>
        <position position="190"/>
    </location>
</feature>
<feature type="mutagenesis site" description="Loss of autoprocessing." evidence="5">
    <original>K</original>
    <variation>G</variation>
    <location>
        <position position="225"/>
    </location>
</feature>
<feature type="mutagenesis site" description="No effect on protease activity." evidence="5">
    <original>K</original>
    <variation>G</variation>
    <location>
        <position position="271"/>
    </location>
</feature>
<feature type="sequence conflict" description="In Ref. 1; AAP84710 and 2; AAP44517." evidence="7" ref="1 2">
    <original>E</original>
    <variation>V</variation>
    <location>
        <position position="203"/>
    </location>
</feature>
<feature type="strand" evidence="8">
    <location>
        <begin position="3"/>
        <end position="9"/>
    </location>
</feature>
<feature type="helix" evidence="8">
    <location>
        <begin position="22"/>
        <end position="35"/>
    </location>
</feature>
<feature type="helix" evidence="8">
    <location>
        <begin position="41"/>
        <end position="43"/>
    </location>
</feature>
<feature type="strand" evidence="8">
    <location>
        <begin position="44"/>
        <end position="50"/>
    </location>
</feature>
<feature type="helix" evidence="8">
    <location>
        <begin position="59"/>
        <end position="71"/>
    </location>
</feature>
<feature type="strand" evidence="8">
    <location>
        <begin position="78"/>
        <end position="91"/>
    </location>
</feature>
<feature type="strand" evidence="8">
    <location>
        <begin position="102"/>
        <end position="107"/>
    </location>
</feature>
<feature type="helix" evidence="8">
    <location>
        <begin position="116"/>
        <end position="123"/>
    </location>
</feature>
<feature type="strand" evidence="8">
    <location>
        <begin position="131"/>
        <end position="139"/>
    </location>
</feature>
<feature type="strand" evidence="10">
    <location>
        <begin position="212"/>
        <end position="214"/>
    </location>
</feature>
<feature type="strand" evidence="8">
    <location>
        <begin position="219"/>
        <end position="226"/>
    </location>
</feature>
<feature type="helix" evidence="8">
    <location>
        <begin position="229"/>
        <end position="239"/>
    </location>
</feature>
<feature type="helix" evidence="8">
    <location>
        <begin position="250"/>
        <end position="257"/>
    </location>
</feature>
<feature type="helix" evidence="8">
    <location>
        <begin position="264"/>
        <end position="277"/>
    </location>
</feature>
<feature type="turn" evidence="9">
    <location>
        <begin position="281"/>
        <end position="283"/>
    </location>
</feature>
<feature type="helix" evidence="8">
    <location>
        <begin position="284"/>
        <end position="302"/>
    </location>
</feature>
<feature type="helix" evidence="8">
    <location>
        <begin position="306"/>
        <end position="313"/>
    </location>
</feature>
<feature type="helix" evidence="8">
    <location>
        <begin position="320"/>
        <end position="323"/>
    </location>
</feature>
<feature type="strand" evidence="8">
    <location>
        <begin position="324"/>
        <end position="326"/>
    </location>
</feature>
<feature type="helix" evidence="8">
    <location>
        <begin position="329"/>
        <end position="331"/>
    </location>
</feature>
<feature type="strand" evidence="8">
    <location>
        <begin position="338"/>
        <end position="344"/>
    </location>
</feature>
<feature type="strand" evidence="8">
    <location>
        <begin position="351"/>
        <end position="357"/>
    </location>
</feature>
<feature type="helix" evidence="8">
    <location>
        <begin position="359"/>
        <end position="361"/>
    </location>
</feature>
<feature type="helix" evidence="8">
    <location>
        <begin position="365"/>
        <end position="376"/>
    </location>
</feature>
<feature type="helix" evidence="8">
    <location>
        <begin position="383"/>
        <end position="396"/>
    </location>
</feature>
<feature type="strand" evidence="8">
    <location>
        <begin position="405"/>
        <end position="408"/>
    </location>
</feature>
<feature type="turn" evidence="10">
    <location>
        <begin position="409"/>
        <end position="413"/>
    </location>
</feature>
<feature type="strand" evidence="8">
    <location>
        <begin position="414"/>
        <end position="418"/>
    </location>
</feature>
<proteinExistence type="evidence at protein level"/>